<reference key="1">
    <citation type="journal article" date="2009" name="J. Bacteriol.">
        <title>Genomic sequencing reveals regulatory mutations and recombinational events in the widely used MC4100 lineage of Escherichia coli K-12.</title>
        <authorList>
            <person name="Ferenci T."/>
            <person name="Zhou Z."/>
            <person name="Betteridge T."/>
            <person name="Ren Y."/>
            <person name="Liu Y."/>
            <person name="Feng L."/>
            <person name="Reeves P.R."/>
            <person name="Wang L."/>
        </authorList>
    </citation>
    <scope>NUCLEOTIDE SEQUENCE [LARGE SCALE GENOMIC DNA]</scope>
    <source>
        <strain>K12 / MC4100 / BW2952</strain>
    </source>
</reference>
<comment type="function">
    <text evidence="1">Catalyzes the formation of 2-(5''-triphosphoribosyl)-3'-dephosphocoenzyme-A, the precursor of the prosthetic group of the holo-acyl carrier protein (gamma chain) of citrate lyase, from ATP and dephospho-CoA.</text>
</comment>
<comment type="catalytic activity">
    <reaction evidence="1">
        <text>3'-dephospho-CoA + ATP = 2'-(5''-triphospho-alpha-D-ribosyl)-3'-dephospho-CoA + adenine</text>
        <dbReference type="Rhea" id="RHEA:15117"/>
        <dbReference type="ChEBI" id="CHEBI:16708"/>
        <dbReference type="ChEBI" id="CHEBI:30616"/>
        <dbReference type="ChEBI" id="CHEBI:57328"/>
        <dbReference type="ChEBI" id="CHEBI:61378"/>
        <dbReference type="EC" id="2.4.2.52"/>
    </reaction>
</comment>
<comment type="similarity">
    <text evidence="1">Belongs to the CitG/MdcB family.</text>
</comment>
<sequence length="292" mass="31644">MSMPATSTKTTKLATSLIDEYALLGWRAMLTEVNLSPKPGLVDRINCGAHKDMALEDFHRSALAIQGWLPRFIEFGACSAEMAPEAVLHGLRPIGMACEGDMFRATAGVNTHKGSIFSLGLLCAAIGRLLQLNQPVTPTTVCSTAASFCRGLTDRELRTNNSQLTAGQRLYQQLGLTGARGEAEAGYPLVINHALPHYLTLLDQGLDPELALLDTLLLLMAINGDTNVASRGGEGGLRWLQREAQTLLQKGGIRTPADLDYLRQFDRECIERNLSPGGSADLLILTWFLAQI</sequence>
<organism>
    <name type="scientific">Escherichia coli (strain K12 / MC4100 / BW2952)</name>
    <dbReference type="NCBI Taxonomy" id="595496"/>
    <lineage>
        <taxon>Bacteria</taxon>
        <taxon>Pseudomonadati</taxon>
        <taxon>Pseudomonadota</taxon>
        <taxon>Gammaproteobacteria</taxon>
        <taxon>Enterobacterales</taxon>
        <taxon>Enterobacteriaceae</taxon>
        <taxon>Escherichia</taxon>
    </lineage>
</organism>
<dbReference type="EC" id="2.4.2.52" evidence="1"/>
<dbReference type="EMBL" id="CP001396">
    <property type="protein sequence ID" value="ACR65701.1"/>
    <property type="molecule type" value="Genomic_DNA"/>
</dbReference>
<dbReference type="RefSeq" id="WP_000062457.1">
    <property type="nucleotide sequence ID" value="NC_012759.1"/>
</dbReference>
<dbReference type="KEGG" id="ebw:BWG_0486"/>
<dbReference type="HOGENOM" id="CLU_056179_1_0_6"/>
<dbReference type="GO" id="GO:0005524">
    <property type="term" value="F:ATP binding"/>
    <property type="evidence" value="ECO:0007669"/>
    <property type="project" value="UniProtKB-KW"/>
</dbReference>
<dbReference type="GO" id="GO:0046917">
    <property type="term" value="F:triphosphoribosyl-dephospho-CoA synthase activity"/>
    <property type="evidence" value="ECO:0007669"/>
    <property type="project" value="UniProtKB-UniRule"/>
</dbReference>
<dbReference type="GO" id="GO:0051191">
    <property type="term" value="P:prosthetic group biosynthetic process"/>
    <property type="evidence" value="ECO:0007669"/>
    <property type="project" value="TreeGrafter"/>
</dbReference>
<dbReference type="FunFam" id="1.10.4200.10:FF:000001">
    <property type="entry name" value="Triphosphoribosyl-dephospho-CoA synthase CitG"/>
    <property type="match status" value="1"/>
</dbReference>
<dbReference type="Gene3D" id="1.10.4200.10">
    <property type="entry name" value="Triphosphoribosyl-dephospho-CoA protein"/>
    <property type="match status" value="1"/>
</dbReference>
<dbReference type="HAMAP" id="MF_00397">
    <property type="entry name" value="CitG"/>
    <property type="match status" value="1"/>
</dbReference>
<dbReference type="InterPro" id="IPR002736">
    <property type="entry name" value="CitG"/>
</dbReference>
<dbReference type="InterPro" id="IPR017551">
    <property type="entry name" value="TriPribosyl-deP-CoA_syn_CitG"/>
</dbReference>
<dbReference type="NCBIfam" id="TIGR03125">
    <property type="entry name" value="citrate_citG"/>
    <property type="match status" value="1"/>
</dbReference>
<dbReference type="NCBIfam" id="NF007503">
    <property type="entry name" value="PRK10096.1"/>
    <property type="match status" value="1"/>
</dbReference>
<dbReference type="PANTHER" id="PTHR30201:SF2">
    <property type="entry name" value="2-(5''-TRIPHOSPHORIBOSYL)-3'-DEPHOSPHOCOENZYME-A SYNTHASE"/>
    <property type="match status" value="1"/>
</dbReference>
<dbReference type="PANTHER" id="PTHR30201">
    <property type="entry name" value="TRIPHOSPHORIBOSYL-DEPHOSPHO-COA SYNTHASE"/>
    <property type="match status" value="1"/>
</dbReference>
<dbReference type="Pfam" id="PF01874">
    <property type="entry name" value="CitG"/>
    <property type="match status" value="1"/>
</dbReference>
<proteinExistence type="inferred from homology"/>
<keyword id="KW-0067">ATP-binding</keyword>
<keyword id="KW-0547">Nucleotide-binding</keyword>
<keyword id="KW-0808">Transferase</keyword>
<name>CITG_ECOBW</name>
<feature type="chain" id="PRO_1000205873" description="2-(5''-triphosphoribosyl)-3'-dephosphocoenzyme-A synthase">
    <location>
        <begin position="1"/>
        <end position="292"/>
    </location>
</feature>
<evidence type="ECO:0000255" key="1">
    <source>
        <dbReference type="HAMAP-Rule" id="MF_00397"/>
    </source>
</evidence>
<protein>
    <recommendedName>
        <fullName evidence="1">2-(5''-triphosphoribosyl)-3'-dephosphocoenzyme-A synthase</fullName>
        <shortName evidence="1">2-(5''-triphosphoribosyl)-3'-dephospho-CoA synthase</shortName>
        <ecNumber evidence="1">2.4.2.52</ecNumber>
    </recommendedName>
</protein>
<gene>
    <name evidence="1" type="primary">citG</name>
    <name type="ordered locus">BWG_0486</name>
</gene>
<accession>C4ZWA2</accession>